<feature type="chain" id="PRO_0000335658" description="Acetylglutamate kinase">
    <location>
        <begin position="1"/>
        <end position="259"/>
    </location>
</feature>
<feature type="binding site" evidence="1">
    <location>
        <begin position="46"/>
        <end position="47"/>
    </location>
    <ligand>
        <name>substrate</name>
    </ligand>
</feature>
<feature type="binding site" evidence="1">
    <location>
        <position position="68"/>
    </location>
    <ligand>
        <name>substrate</name>
    </ligand>
</feature>
<feature type="binding site" evidence="1">
    <location>
        <position position="162"/>
    </location>
    <ligand>
        <name>substrate</name>
    </ligand>
</feature>
<feature type="site" description="Transition state stabilizer" evidence="1">
    <location>
        <position position="14"/>
    </location>
</feature>
<feature type="site" description="Transition state stabilizer" evidence="1">
    <location>
        <position position="221"/>
    </location>
</feature>
<proteinExistence type="inferred from homology"/>
<dbReference type="EC" id="2.7.2.8" evidence="1"/>
<dbReference type="EMBL" id="CP000804">
    <property type="protein sequence ID" value="ABU59411.1"/>
    <property type="molecule type" value="Genomic_DNA"/>
</dbReference>
<dbReference type="RefSeq" id="WP_012121835.1">
    <property type="nucleotide sequence ID" value="NC_009767.1"/>
</dbReference>
<dbReference type="SMR" id="A7NPB5"/>
<dbReference type="STRING" id="383372.Rcas_3361"/>
<dbReference type="KEGG" id="rca:Rcas_3361"/>
<dbReference type="eggNOG" id="COG0548">
    <property type="taxonomic scope" value="Bacteria"/>
</dbReference>
<dbReference type="HOGENOM" id="CLU_053680_1_0_0"/>
<dbReference type="OrthoDB" id="9803155at2"/>
<dbReference type="UniPathway" id="UPA00068">
    <property type="reaction ID" value="UER00107"/>
</dbReference>
<dbReference type="Proteomes" id="UP000000263">
    <property type="component" value="Chromosome"/>
</dbReference>
<dbReference type="GO" id="GO:0005737">
    <property type="term" value="C:cytoplasm"/>
    <property type="evidence" value="ECO:0007669"/>
    <property type="project" value="UniProtKB-SubCell"/>
</dbReference>
<dbReference type="GO" id="GO:0003991">
    <property type="term" value="F:acetylglutamate kinase activity"/>
    <property type="evidence" value="ECO:0007669"/>
    <property type="project" value="UniProtKB-UniRule"/>
</dbReference>
<dbReference type="GO" id="GO:0005524">
    <property type="term" value="F:ATP binding"/>
    <property type="evidence" value="ECO:0007669"/>
    <property type="project" value="UniProtKB-UniRule"/>
</dbReference>
<dbReference type="GO" id="GO:0042450">
    <property type="term" value="P:arginine biosynthetic process via ornithine"/>
    <property type="evidence" value="ECO:0007669"/>
    <property type="project" value="UniProtKB-UniRule"/>
</dbReference>
<dbReference type="GO" id="GO:0006526">
    <property type="term" value="P:L-arginine biosynthetic process"/>
    <property type="evidence" value="ECO:0007669"/>
    <property type="project" value="UniProtKB-UniPathway"/>
</dbReference>
<dbReference type="CDD" id="cd04238">
    <property type="entry name" value="AAK_NAGK-like"/>
    <property type="match status" value="1"/>
</dbReference>
<dbReference type="Gene3D" id="3.40.1160.10">
    <property type="entry name" value="Acetylglutamate kinase-like"/>
    <property type="match status" value="1"/>
</dbReference>
<dbReference type="HAMAP" id="MF_00082">
    <property type="entry name" value="ArgB"/>
    <property type="match status" value="1"/>
</dbReference>
<dbReference type="InterPro" id="IPR036393">
    <property type="entry name" value="AceGlu_kinase-like_sf"/>
</dbReference>
<dbReference type="InterPro" id="IPR004662">
    <property type="entry name" value="AcgluKinase_fam"/>
</dbReference>
<dbReference type="InterPro" id="IPR037528">
    <property type="entry name" value="ArgB"/>
</dbReference>
<dbReference type="InterPro" id="IPR001048">
    <property type="entry name" value="Asp/Glu/Uridylate_kinase"/>
</dbReference>
<dbReference type="NCBIfam" id="TIGR00761">
    <property type="entry name" value="argB"/>
    <property type="match status" value="1"/>
</dbReference>
<dbReference type="PANTHER" id="PTHR23342">
    <property type="entry name" value="N-ACETYLGLUTAMATE SYNTHASE"/>
    <property type="match status" value="1"/>
</dbReference>
<dbReference type="PANTHER" id="PTHR23342:SF0">
    <property type="entry name" value="N-ACETYLGLUTAMATE SYNTHASE, MITOCHONDRIAL"/>
    <property type="match status" value="1"/>
</dbReference>
<dbReference type="Pfam" id="PF00696">
    <property type="entry name" value="AA_kinase"/>
    <property type="match status" value="1"/>
</dbReference>
<dbReference type="PIRSF" id="PIRSF000728">
    <property type="entry name" value="NAGK"/>
    <property type="match status" value="1"/>
</dbReference>
<dbReference type="SUPFAM" id="SSF53633">
    <property type="entry name" value="Carbamate kinase-like"/>
    <property type="match status" value="1"/>
</dbReference>
<protein>
    <recommendedName>
        <fullName evidence="1">Acetylglutamate kinase</fullName>
        <ecNumber evidence="1">2.7.2.8</ecNumber>
    </recommendedName>
    <alternativeName>
        <fullName evidence="1">N-acetyl-L-glutamate 5-phosphotransferase</fullName>
    </alternativeName>
    <alternativeName>
        <fullName evidence="1">NAG kinase</fullName>
        <shortName evidence="1">NAGK</shortName>
    </alternativeName>
</protein>
<evidence type="ECO:0000255" key="1">
    <source>
        <dbReference type="HAMAP-Rule" id="MF_00082"/>
    </source>
</evidence>
<reference key="1">
    <citation type="submission" date="2007-08" db="EMBL/GenBank/DDBJ databases">
        <title>Complete sequence of Roseiflexus castenholzii DSM 13941.</title>
        <authorList>
            <consortium name="US DOE Joint Genome Institute"/>
            <person name="Copeland A."/>
            <person name="Lucas S."/>
            <person name="Lapidus A."/>
            <person name="Barry K."/>
            <person name="Glavina del Rio T."/>
            <person name="Dalin E."/>
            <person name="Tice H."/>
            <person name="Pitluck S."/>
            <person name="Thompson L.S."/>
            <person name="Brettin T."/>
            <person name="Bruce D."/>
            <person name="Detter J.C."/>
            <person name="Han C."/>
            <person name="Tapia R."/>
            <person name="Schmutz J."/>
            <person name="Larimer F."/>
            <person name="Land M."/>
            <person name="Hauser L."/>
            <person name="Kyrpides N."/>
            <person name="Mikhailova N."/>
            <person name="Bryant D.A."/>
            <person name="Hanada S."/>
            <person name="Tsukatani Y."/>
            <person name="Richardson P."/>
        </authorList>
    </citation>
    <scope>NUCLEOTIDE SEQUENCE [LARGE SCALE GENOMIC DNA]</scope>
    <source>
        <strain>DSM 13941 / HLO8</strain>
    </source>
</reference>
<accession>A7NPB5</accession>
<gene>
    <name evidence="1" type="primary">argB</name>
    <name type="ordered locus">Rcas_3361</name>
</gene>
<name>ARGB_ROSCS</name>
<sequence length="259" mass="26833">MTDPVSRQPTLVIKVGGNELDDATFVKELARIVAAMRPIPTLVHGGGKEIGVLQETLGSAPRFVGGLRYTDATALTAAEMVLCGSVSTRLVAALIVAGADALGISGVDRGLIRVVKQEHPAGDLGRVGRPTAVRSEVLHELLNHDVIPVIAPIALGFDGPYNVNADEAAGAIAAALGADEVVFVTNVPGVLVNGDVMPRLTRHEIEHLIADGTISGGMIPKVRAALTALDAGVRAARITNLEGMLEHGTIIIAEGEVHE</sequence>
<keyword id="KW-0028">Amino-acid biosynthesis</keyword>
<keyword id="KW-0055">Arginine biosynthesis</keyword>
<keyword id="KW-0067">ATP-binding</keyword>
<keyword id="KW-0963">Cytoplasm</keyword>
<keyword id="KW-0418">Kinase</keyword>
<keyword id="KW-0547">Nucleotide-binding</keyword>
<keyword id="KW-1185">Reference proteome</keyword>
<keyword id="KW-0808">Transferase</keyword>
<organism>
    <name type="scientific">Roseiflexus castenholzii (strain DSM 13941 / HLO8)</name>
    <dbReference type="NCBI Taxonomy" id="383372"/>
    <lineage>
        <taxon>Bacteria</taxon>
        <taxon>Bacillati</taxon>
        <taxon>Chloroflexota</taxon>
        <taxon>Chloroflexia</taxon>
        <taxon>Chloroflexales</taxon>
        <taxon>Roseiflexineae</taxon>
        <taxon>Roseiflexaceae</taxon>
        <taxon>Roseiflexus</taxon>
    </lineage>
</organism>
<comment type="function">
    <text evidence="1">Catalyzes the ATP-dependent phosphorylation of N-acetyl-L-glutamate.</text>
</comment>
<comment type="catalytic activity">
    <reaction evidence="1">
        <text>N-acetyl-L-glutamate + ATP = N-acetyl-L-glutamyl 5-phosphate + ADP</text>
        <dbReference type="Rhea" id="RHEA:14629"/>
        <dbReference type="ChEBI" id="CHEBI:30616"/>
        <dbReference type="ChEBI" id="CHEBI:44337"/>
        <dbReference type="ChEBI" id="CHEBI:57936"/>
        <dbReference type="ChEBI" id="CHEBI:456216"/>
        <dbReference type="EC" id="2.7.2.8"/>
    </reaction>
</comment>
<comment type="pathway">
    <text evidence="1">Amino-acid biosynthesis; L-arginine biosynthesis; N(2)-acetyl-L-ornithine from L-glutamate: step 2/4.</text>
</comment>
<comment type="subcellular location">
    <subcellularLocation>
        <location evidence="1">Cytoplasm</location>
    </subcellularLocation>
</comment>
<comment type="similarity">
    <text evidence="1">Belongs to the acetylglutamate kinase family. ArgB subfamily.</text>
</comment>